<protein>
    <recommendedName>
        <fullName>Neuferricin</fullName>
    </recommendedName>
    <alternativeName>
        <fullName>Cytochrome b5 domain-containing protein 2</fullName>
    </alternativeName>
</protein>
<feature type="signal peptide" evidence="2">
    <location>
        <begin position="1"/>
        <end position="22"/>
    </location>
</feature>
<feature type="chain" id="PRO_0000312321" description="Neuferricin">
    <location>
        <begin position="23"/>
        <end position="264"/>
    </location>
</feature>
<feature type="domain" description="Cytochrome b5 heme-binding">
    <location>
        <begin position="35"/>
        <end position="134"/>
    </location>
</feature>
<feature type="splice variant" id="VSP_045028" description="In isoform 2." evidence="6">
    <location>
        <begin position="1"/>
        <end position="112"/>
    </location>
</feature>
<feature type="sequence variant" id="VAR_037487" description="In a colorectal cancer sample; somatic mutation; dbSNP:rs200936057." evidence="3">
    <original>R</original>
    <variation>G</variation>
    <location>
        <position position="7"/>
    </location>
</feature>
<feature type="sequence variant" id="VAR_037488" description="In a colorectal cancer sample; somatic mutation." evidence="3">
    <original>R</original>
    <variation>P</variation>
    <location>
        <position position="7"/>
    </location>
</feature>
<sequence length="264" mass="28690">MLRCGGRGLLLGLAVAAAAVMAARLMGWWGPRAGFRLFIPEELSRYRGGPGDPGLYLALLGRVYDVSSGRRHYEPGSHYSGFAGRDASRAFVTGDCSEAGLVDDVSDLSAAEMLTLHNWLSFYEKNYVCVGRVTGRFYGEDGLPTPALTQVEAAITRGLEANKLQLQEKQTFPPCNAEWSSARGSRLWCSQKSGGVSRDWIGVPRKLYKPGAKEPRCVCVRTTGPPSGQMPDNPPHRNRGDLDHPNLAEYTGCPPLAITCSFPL</sequence>
<name>NEUFC_HUMAN</name>
<dbReference type="EMBL" id="AK172844">
    <property type="protein sequence ID" value="BAD18808.1"/>
    <property type="molecule type" value="mRNA"/>
</dbReference>
<dbReference type="EMBL" id="AK313088">
    <property type="protein sequence ID" value="BAG35913.1"/>
    <property type="molecule type" value="mRNA"/>
</dbReference>
<dbReference type="EMBL" id="AC087292">
    <property type="status" value="NOT_ANNOTATED_CDS"/>
    <property type="molecule type" value="Genomic_DNA"/>
</dbReference>
<dbReference type="EMBL" id="CH471108">
    <property type="protein sequence ID" value="EAW90452.1"/>
    <property type="molecule type" value="Genomic_DNA"/>
</dbReference>
<dbReference type="EMBL" id="CH471108">
    <property type="protein sequence ID" value="EAW90453.1"/>
    <property type="molecule type" value="Genomic_DNA"/>
</dbReference>
<dbReference type="EMBL" id="CH471108">
    <property type="protein sequence ID" value="EAW90454.1"/>
    <property type="molecule type" value="Genomic_DNA"/>
</dbReference>
<dbReference type="EMBL" id="BC020263">
    <property type="protein sequence ID" value="AAH20263.1"/>
    <property type="molecule type" value="mRNA"/>
</dbReference>
<dbReference type="EMBL" id="BC051697">
    <property type="protein sequence ID" value="AAH51697.1"/>
    <property type="molecule type" value="mRNA"/>
</dbReference>
<dbReference type="CCDS" id="CCDS11044.1">
    <molecule id="Q8WUJ1-1"/>
</dbReference>
<dbReference type="CCDS" id="CCDS58501.1">
    <molecule id="Q8WUJ1-3"/>
</dbReference>
<dbReference type="RefSeq" id="NP_001241684.1">
    <molecule id="Q8WUJ1-3"/>
    <property type="nucleotide sequence ID" value="NM_001254755.2"/>
</dbReference>
<dbReference type="RefSeq" id="NP_001241685.1">
    <molecule id="Q8WUJ1-3"/>
    <property type="nucleotide sequence ID" value="NM_001254756.1"/>
</dbReference>
<dbReference type="RefSeq" id="NP_653212.1">
    <molecule id="Q8WUJ1-1"/>
    <property type="nucleotide sequence ID" value="NM_144611.4"/>
</dbReference>
<dbReference type="RefSeq" id="XP_011521951.1">
    <property type="nucleotide sequence ID" value="XM_011523649.2"/>
</dbReference>
<dbReference type="RefSeq" id="XP_016879669.1">
    <property type="nucleotide sequence ID" value="XM_017024180.1"/>
</dbReference>
<dbReference type="RefSeq" id="XP_016879670.1">
    <property type="nucleotide sequence ID" value="XM_017024181.1"/>
</dbReference>
<dbReference type="RefSeq" id="XP_016879671.1">
    <property type="nucleotide sequence ID" value="XM_017024182.1"/>
</dbReference>
<dbReference type="RefSeq" id="XP_047291289.1">
    <molecule id="Q8WUJ1-3"/>
    <property type="nucleotide sequence ID" value="XM_047435333.1"/>
</dbReference>
<dbReference type="RefSeq" id="XP_054171017.1">
    <molecule id="Q8WUJ1-3"/>
    <property type="nucleotide sequence ID" value="XM_054315042.1"/>
</dbReference>
<dbReference type="SMR" id="Q8WUJ1"/>
<dbReference type="BioGRID" id="125902">
    <property type="interactions" value="42"/>
</dbReference>
<dbReference type="FunCoup" id="Q8WUJ1">
    <property type="interactions" value="1656"/>
</dbReference>
<dbReference type="IntAct" id="Q8WUJ1">
    <property type="interactions" value="34"/>
</dbReference>
<dbReference type="STRING" id="9606.ENSP00000301391"/>
<dbReference type="iPTMnet" id="Q8WUJ1"/>
<dbReference type="PhosphoSitePlus" id="Q8WUJ1"/>
<dbReference type="SwissPalm" id="Q8WUJ1"/>
<dbReference type="BioMuta" id="CYB5D2"/>
<dbReference type="DMDM" id="74730719"/>
<dbReference type="jPOST" id="Q8WUJ1"/>
<dbReference type="MassIVE" id="Q8WUJ1"/>
<dbReference type="PaxDb" id="9606-ENSP00000301391"/>
<dbReference type="PeptideAtlas" id="Q8WUJ1"/>
<dbReference type="ProteomicsDB" id="46668"/>
<dbReference type="ProteomicsDB" id="74689">
    <molecule id="Q8WUJ1-1"/>
</dbReference>
<dbReference type="Pumba" id="Q8WUJ1"/>
<dbReference type="Antibodypedia" id="23235">
    <property type="antibodies" value="74 antibodies from 14 providers"/>
</dbReference>
<dbReference type="DNASU" id="124936"/>
<dbReference type="Ensembl" id="ENST00000301391.8">
    <molecule id="Q8WUJ1-1"/>
    <property type="protein sequence ID" value="ENSP00000301391.4"/>
    <property type="gene ID" value="ENSG00000167740.10"/>
</dbReference>
<dbReference type="Ensembl" id="ENST00000575251.5">
    <molecule id="Q8WUJ1-3"/>
    <property type="protein sequence ID" value="ENSP00000458903.1"/>
    <property type="gene ID" value="ENSG00000167740.10"/>
</dbReference>
<dbReference type="Ensembl" id="ENST00000577075.6">
    <molecule id="Q8WUJ1-3"/>
    <property type="protein sequence ID" value="ENSP00000458352.2"/>
    <property type="gene ID" value="ENSG00000167740.10"/>
</dbReference>
<dbReference type="GeneID" id="124936"/>
<dbReference type="KEGG" id="hsa:124936"/>
<dbReference type="MANE-Select" id="ENST00000301391.8">
    <property type="protein sequence ID" value="ENSP00000301391.4"/>
    <property type="RefSeq nucleotide sequence ID" value="NM_144611.4"/>
    <property type="RefSeq protein sequence ID" value="NP_653212.1"/>
</dbReference>
<dbReference type="UCSC" id="uc002fxl.6">
    <molecule id="Q8WUJ1-1"/>
    <property type="organism name" value="human"/>
</dbReference>
<dbReference type="AGR" id="HGNC:28471"/>
<dbReference type="CTD" id="124936"/>
<dbReference type="DisGeNET" id="124936"/>
<dbReference type="GeneCards" id="CYB5D2"/>
<dbReference type="HGNC" id="HGNC:28471">
    <property type="gene designation" value="CYB5D2"/>
</dbReference>
<dbReference type="HPA" id="ENSG00000167740">
    <property type="expression patterns" value="Low tissue specificity"/>
</dbReference>
<dbReference type="neXtProt" id="NX_Q8WUJ1"/>
<dbReference type="OpenTargets" id="ENSG00000167740"/>
<dbReference type="PharmGKB" id="PA142672059"/>
<dbReference type="VEuPathDB" id="HostDB:ENSG00000167740"/>
<dbReference type="eggNOG" id="KOG1108">
    <property type="taxonomic scope" value="Eukaryota"/>
</dbReference>
<dbReference type="GeneTree" id="ENSGT00940000160156"/>
<dbReference type="HOGENOM" id="CLU_065455_2_0_1"/>
<dbReference type="InParanoid" id="Q8WUJ1"/>
<dbReference type="OMA" id="GHKHYGP"/>
<dbReference type="OrthoDB" id="10257697at2759"/>
<dbReference type="PAN-GO" id="Q8WUJ1">
    <property type="GO annotations" value="2 GO annotations based on evolutionary models"/>
</dbReference>
<dbReference type="PhylomeDB" id="Q8WUJ1"/>
<dbReference type="TreeFam" id="TF313943"/>
<dbReference type="PathwayCommons" id="Q8WUJ1"/>
<dbReference type="SignaLink" id="Q8WUJ1"/>
<dbReference type="BioGRID-ORCS" id="124936">
    <property type="hits" value="11 hits in 1157 CRISPR screens"/>
</dbReference>
<dbReference type="ChiTaRS" id="CYB5D2">
    <property type="organism name" value="human"/>
</dbReference>
<dbReference type="GenomeRNAi" id="124936"/>
<dbReference type="Pharos" id="Q8WUJ1">
    <property type="development level" value="Tbio"/>
</dbReference>
<dbReference type="PRO" id="PR:Q8WUJ1"/>
<dbReference type="Proteomes" id="UP000005640">
    <property type="component" value="Chromosome 17"/>
</dbReference>
<dbReference type="RNAct" id="Q8WUJ1">
    <property type="molecule type" value="protein"/>
</dbReference>
<dbReference type="Bgee" id="ENSG00000167740">
    <property type="expression patterns" value="Expressed in kidney epithelium and 138 other cell types or tissues"/>
</dbReference>
<dbReference type="ExpressionAtlas" id="Q8WUJ1">
    <property type="expression patterns" value="baseline and differential"/>
</dbReference>
<dbReference type="GO" id="GO:0012505">
    <property type="term" value="C:endomembrane system"/>
    <property type="evidence" value="ECO:0000318"/>
    <property type="project" value="GO_Central"/>
</dbReference>
<dbReference type="GO" id="GO:0005576">
    <property type="term" value="C:extracellular region"/>
    <property type="evidence" value="ECO:0007669"/>
    <property type="project" value="UniProtKB-SubCell"/>
</dbReference>
<dbReference type="GO" id="GO:0016020">
    <property type="term" value="C:membrane"/>
    <property type="evidence" value="ECO:0000318"/>
    <property type="project" value="GO_Central"/>
</dbReference>
<dbReference type="GO" id="GO:0020037">
    <property type="term" value="F:heme binding"/>
    <property type="evidence" value="ECO:0007669"/>
    <property type="project" value="Ensembl"/>
</dbReference>
<dbReference type="GO" id="GO:0030182">
    <property type="term" value="P:neuron differentiation"/>
    <property type="evidence" value="ECO:0007669"/>
    <property type="project" value="Ensembl"/>
</dbReference>
<dbReference type="GO" id="GO:0045666">
    <property type="term" value="P:positive regulation of neuron differentiation"/>
    <property type="evidence" value="ECO:0007669"/>
    <property type="project" value="Ensembl"/>
</dbReference>
<dbReference type="FunFam" id="3.10.120.10:FF:000003">
    <property type="entry name" value="membrane-associated progesterone receptor component 1"/>
    <property type="match status" value="1"/>
</dbReference>
<dbReference type="Gene3D" id="3.10.120.10">
    <property type="entry name" value="Cytochrome b5-like heme/steroid binding domain"/>
    <property type="match status" value="1"/>
</dbReference>
<dbReference type="InterPro" id="IPR001199">
    <property type="entry name" value="Cyt_B5-like_heme/steroid-bd"/>
</dbReference>
<dbReference type="InterPro" id="IPR036400">
    <property type="entry name" value="Cyt_B5-like_heme/steroid_sf"/>
</dbReference>
<dbReference type="InterPro" id="IPR050577">
    <property type="entry name" value="MAPR/NEUFC/NENF-like"/>
</dbReference>
<dbReference type="PANTHER" id="PTHR10281">
    <property type="entry name" value="MEMBRANE-ASSOCIATED PROGESTERONE RECEPTOR COMPONENT-RELATED"/>
    <property type="match status" value="1"/>
</dbReference>
<dbReference type="PANTHER" id="PTHR10281:SF4">
    <property type="entry name" value="NEUFERRICIN"/>
    <property type="match status" value="1"/>
</dbReference>
<dbReference type="Pfam" id="PF00173">
    <property type="entry name" value="Cyt-b5"/>
    <property type="match status" value="1"/>
</dbReference>
<dbReference type="SMART" id="SM01117">
    <property type="entry name" value="Cyt-b5"/>
    <property type="match status" value="1"/>
</dbReference>
<dbReference type="SUPFAM" id="SSF55856">
    <property type="entry name" value="Cytochrome b5-like heme/steroid binding domain"/>
    <property type="match status" value="1"/>
</dbReference>
<reference key="1">
    <citation type="journal article" date="2004" name="Nat. Genet.">
        <title>Complete sequencing and characterization of 21,243 full-length human cDNAs.</title>
        <authorList>
            <person name="Ota T."/>
            <person name="Suzuki Y."/>
            <person name="Nishikawa T."/>
            <person name="Otsuki T."/>
            <person name="Sugiyama T."/>
            <person name="Irie R."/>
            <person name="Wakamatsu A."/>
            <person name="Hayashi K."/>
            <person name="Sato H."/>
            <person name="Nagai K."/>
            <person name="Kimura K."/>
            <person name="Makita H."/>
            <person name="Sekine M."/>
            <person name="Obayashi M."/>
            <person name="Nishi T."/>
            <person name="Shibahara T."/>
            <person name="Tanaka T."/>
            <person name="Ishii S."/>
            <person name="Yamamoto J."/>
            <person name="Saito K."/>
            <person name="Kawai Y."/>
            <person name="Isono Y."/>
            <person name="Nakamura Y."/>
            <person name="Nagahari K."/>
            <person name="Murakami K."/>
            <person name="Yasuda T."/>
            <person name="Iwayanagi T."/>
            <person name="Wagatsuma M."/>
            <person name="Shiratori A."/>
            <person name="Sudo H."/>
            <person name="Hosoiri T."/>
            <person name="Kaku Y."/>
            <person name="Kodaira H."/>
            <person name="Kondo H."/>
            <person name="Sugawara M."/>
            <person name="Takahashi M."/>
            <person name="Kanda K."/>
            <person name="Yokoi T."/>
            <person name="Furuya T."/>
            <person name="Kikkawa E."/>
            <person name="Omura Y."/>
            <person name="Abe K."/>
            <person name="Kamihara K."/>
            <person name="Katsuta N."/>
            <person name="Sato K."/>
            <person name="Tanikawa M."/>
            <person name="Yamazaki M."/>
            <person name="Ninomiya K."/>
            <person name="Ishibashi T."/>
            <person name="Yamashita H."/>
            <person name="Murakawa K."/>
            <person name="Fujimori K."/>
            <person name="Tanai H."/>
            <person name="Kimata M."/>
            <person name="Watanabe M."/>
            <person name="Hiraoka S."/>
            <person name="Chiba Y."/>
            <person name="Ishida S."/>
            <person name="Ono Y."/>
            <person name="Takiguchi S."/>
            <person name="Watanabe S."/>
            <person name="Yosida M."/>
            <person name="Hotuta T."/>
            <person name="Kusano J."/>
            <person name="Kanehori K."/>
            <person name="Takahashi-Fujii A."/>
            <person name="Hara H."/>
            <person name="Tanase T.-O."/>
            <person name="Nomura Y."/>
            <person name="Togiya S."/>
            <person name="Komai F."/>
            <person name="Hara R."/>
            <person name="Takeuchi K."/>
            <person name="Arita M."/>
            <person name="Imose N."/>
            <person name="Musashino K."/>
            <person name="Yuuki H."/>
            <person name="Oshima A."/>
            <person name="Sasaki N."/>
            <person name="Aotsuka S."/>
            <person name="Yoshikawa Y."/>
            <person name="Matsunawa H."/>
            <person name="Ichihara T."/>
            <person name="Shiohata N."/>
            <person name="Sano S."/>
            <person name="Moriya S."/>
            <person name="Momiyama H."/>
            <person name="Satoh N."/>
            <person name="Takami S."/>
            <person name="Terashima Y."/>
            <person name="Suzuki O."/>
            <person name="Nakagawa S."/>
            <person name="Senoh A."/>
            <person name="Mizoguchi H."/>
            <person name="Goto Y."/>
            <person name="Shimizu F."/>
            <person name="Wakebe H."/>
            <person name="Hishigaki H."/>
            <person name="Watanabe T."/>
            <person name="Sugiyama A."/>
            <person name="Takemoto M."/>
            <person name="Kawakami B."/>
            <person name="Yamazaki M."/>
            <person name="Watanabe K."/>
            <person name="Kumagai A."/>
            <person name="Itakura S."/>
            <person name="Fukuzumi Y."/>
            <person name="Fujimori Y."/>
            <person name="Komiyama M."/>
            <person name="Tashiro H."/>
            <person name="Tanigami A."/>
            <person name="Fujiwara T."/>
            <person name="Ono T."/>
            <person name="Yamada K."/>
            <person name="Fujii Y."/>
            <person name="Ozaki K."/>
            <person name="Hirao M."/>
            <person name="Ohmori Y."/>
            <person name="Kawabata A."/>
            <person name="Hikiji T."/>
            <person name="Kobatake N."/>
            <person name="Inagaki H."/>
            <person name="Ikema Y."/>
            <person name="Okamoto S."/>
            <person name="Okitani R."/>
            <person name="Kawakami T."/>
            <person name="Noguchi S."/>
            <person name="Itoh T."/>
            <person name="Shigeta K."/>
            <person name="Senba T."/>
            <person name="Matsumura K."/>
            <person name="Nakajima Y."/>
            <person name="Mizuno T."/>
            <person name="Morinaga M."/>
            <person name="Sasaki M."/>
            <person name="Togashi T."/>
            <person name="Oyama M."/>
            <person name="Hata H."/>
            <person name="Watanabe M."/>
            <person name="Komatsu T."/>
            <person name="Mizushima-Sugano J."/>
            <person name="Satoh T."/>
            <person name="Shirai Y."/>
            <person name="Takahashi Y."/>
            <person name="Nakagawa K."/>
            <person name="Okumura K."/>
            <person name="Nagase T."/>
            <person name="Nomura N."/>
            <person name="Kikuchi H."/>
            <person name="Masuho Y."/>
            <person name="Yamashita R."/>
            <person name="Nakai K."/>
            <person name="Yada T."/>
            <person name="Nakamura Y."/>
            <person name="Ohara O."/>
            <person name="Isogai T."/>
            <person name="Sugano S."/>
        </authorList>
    </citation>
    <scope>NUCLEOTIDE SEQUENCE [LARGE SCALE MRNA] (ISOFORM 1)</scope>
    <source>
        <tissue>Subthalamic nucleus</tissue>
    </source>
</reference>
<reference key="2">
    <citation type="journal article" date="2006" name="Nature">
        <title>DNA sequence of human chromosome 17 and analysis of rearrangement in the human lineage.</title>
        <authorList>
            <person name="Zody M.C."/>
            <person name="Garber M."/>
            <person name="Adams D.J."/>
            <person name="Sharpe T."/>
            <person name="Harrow J."/>
            <person name="Lupski J.R."/>
            <person name="Nicholson C."/>
            <person name="Searle S.M."/>
            <person name="Wilming L."/>
            <person name="Young S.K."/>
            <person name="Abouelleil A."/>
            <person name="Allen N.R."/>
            <person name="Bi W."/>
            <person name="Bloom T."/>
            <person name="Borowsky M.L."/>
            <person name="Bugalter B.E."/>
            <person name="Butler J."/>
            <person name="Chang J.L."/>
            <person name="Chen C.-K."/>
            <person name="Cook A."/>
            <person name="Corum B."/>
            <person name="Cuomo C.A."/>
            <person name="de Jong P.J."/>
            <person name="DeCaprio D."/>
            <person name="Dewar K."/>
            <person name="FitzGerald M."/>
            <person name="Gilbert J."/>
            <person name="Gibson R."/>
            <person name="Gnerre S."/>
            <person name="Goldstein S."/>
            <person name="Grafham D.V."/>
            <person name="Grocock R."/>
            <person name="Hafez N."/>
            <person name="Hagopian D.S."/>
            <person name="Hart E."/>
            <person name="Norman C.H."/>
            <person name="Humphray S."/>
            <person name="Jaffe D.B."/>
            <person name="Jones M."/>
            <person name="Kamal M."/>
            <person name="Khodiyar V.K."/>
            <person name="LaButti K."/>
            <person name="Laird G."/>
            <person name="Lehoczky J."/>
            <person name="Liu X."/>
            <person name="Lokyitsang T."/>
            <person name="Loveland J."/>
            <person name="Lui A."/>
            <person name="Macdonald P."/>
            <person name="Major J.E."/>
            <person name="Matthews L."/>
            <person name="Mauceli E."/>
            <person name="McCarroll S.A."/>
            <person name="Mihalev A.H."/>
            <person name="Mudge J."/>
            <person name="Nguyen C."/>
            <person name="Nicol R."/>
            <person name="O'Leary S.B."/>
            <person name="Osoegawa K."/>
            <person name="Schwartz D.C."/>
            <person name="Shaw-Smith C."/>
            <person name="Stankiewicz P."/>
            <person name="Steward C."/>
            <person name="Swarbreck D."/>
            <person name="Venkataraman V."/>
            <person name="Whittaker C.A."/>
            <person name="Yang X."/>
            <person name="Zimmer A.R."/>
            <person name="Bradley A."/>
            <person name="Hubbard T."/>
            <person name="Birren B.W."/>
            <person name="Rogers J."/>
            <person name="Lander E.S."/>
            <person name="Nusbaum C."/>
        </authorList>
    </citation>
    <scope>NUCLEOTIDE SEQUENCE [LARGE SCALE GENOMIC DNA]</scope>
</reference>
<reference key="3">
    <citation type="submission" date="2005-09" db="EMBL/GenBank/DDBJ databases">
        <authorList>
            <person name="Mural R.J."/>
            <person name="Istrail S."/>
            <person name="Sutton G.G."/>
            <person name="Florea L."/>
            <person name="Halpern A.L."/>
            <person name="Mobarry C.M."/>
            <person name="Lippert R."/>
            <person name="Walenz B."/>
            <person name="Shatkay H."/>
            <person name="Dew I."/>
            <person name="Miller J.R."/>
            <person name="Flanigan M.J."/>
            <person name="Edwards N.J."/>
            <person name="Bolanos R."/>
            <person name="Fasulo D."/>
            <person name="Halldorsson B.V."/>
            <person name="Hannenhalli S."/>
            <person name="Turner R."/>
            <person name="Yooseph S."/>
            <person name="Lu F."/>
            <person name="Nusskern D.R."/>
            <person name="Shue B.C."/>
            <person name="Zheng X.H."/>
            <person name="Zhong F."/>
            <person name="Delcher A.L."/>
            <person name="Huson D.H."/>
            <person name="Kravitz S.A."/>
            <person name="Mouchard L."/>
            <person name="Reinert K."/>
            <person name="Remington K.A."/>
            <person name="Clark A.G."/>
            <person name="Waterman M.S."/>
            <person name="Eichler E.E."/>
            <person name="Adams M.D."/>
            <person name="Hunkapiller M.W."/>
            <person name="Myers E.W."/>
            <person name="Venter J.C."/>
        </authorList>
    </citation>
    <scope>NUCLEOTIDE SEQUENCE [LARGE SCALE GENOMIC DNA]</scope>
</reference>
<reference key="4">
    <citation type="journal article" date="2004" name="Genome Res.">
        <title>The status, quality, and expansion of the NIH full-length cDNA project: the Mammalian Gene Collection (MGC).</title>
        <authorList>
            <consortium name="The MGC Project Team"/>
        </authorList>
    </citation>
    <scope>NUCLEOTIDE SEQUENCE [LARGE SCALE MRNA] (ISOFORM 1)</scope>
    <source>
        <tissue>Colon</tissue>
        <tissue>Rhabdomyosarcoma</tissue>
        <tissue>Skin</tissue>
    </source>
</reference>
<reference key="5">
    <citation type="journal article" date="2006" name="Science">
        <title>The consensus coding sequences of human breast and colorectal cancers.</title>
        <authorList>
            <person name="Sjoeblom T."/>
            <person name="Jones S."/>
            <person name="Wood L.D."/>
            <person name="Parsons D.W."/>
            <person name="Lin J."/>
            <person name="Barber T.D."/>
            <person name="Mandelker D."/>
            <person name="Leary R.J."/>
            <person name="Ptak J."/>
            <person name="Silliman N."/>
            <person name="Szabo S."/>
            <person name="Buckhaults P."/>
            <person name="Farrell C."/>
            <person name="Meeh P."/>
            <person name="Markowitz S.D."/>
            <person name="Willis J."/>
            <person name="Dawson D."/>
            <person name="Willson J.K.V."/>
            <person name="Gazdar A.F."/>
            <person name="Hartigan J."/>
            <person name="Wu L."/>
            <person name="Liu C."/>
            <person name="Parmigiani G."/>
            <person name="Park B.H."/>
            <person name="Bachman K.E."/>
            <person name="Papadopoulos N."/>
            <person name="Vogelstein B."/>
            <person name="Kinzler K.W."/>
            <person name="Velculescu V.E."/>
        </authorList>
    </citation>
    <scope>VARIANTS [LARGE SCALE ANALYSIS] GLY-7 AND PRO-7</scope>
</reference>
<reference key="6">
    <citation type="journal article" date="2013" name="J. Neuroendocrinol.">
        <title>Nonclassical progesterone signalling molecules in the nervous system.</title>
        <authorList>
            <person name="Petersen S.L."/>
            <person name="Intlekofer K.A."/>
            <person name="Moura-Conlon P.J."/>
            <person name="Brewer D.N."/>
            <person name="Del Pino Sans J."/>
            <person name="Lopez J.A."/>
        </authorList>
    </citation>
    <scope>MISCELLANEOUS</scope>
    <scope>REVIEW</scope>
</reference>
<reference key="7">
    <citation type="journal article" date="2017" name="Front. Pharmacol.">
        <title>Membrane associated progesterone receptors: promiscuous proteins with pleiotropic functions - focus on interactions with cytochromes P450.</title>
        <authorList>
            <person name="Ryu C.S."/>
            <person name="Klein K."/>
            <person name="Zanger U.M."/>
        </authorList>
    </citation>
    <scope>REVIEW</scope>
    <scope>MISCELLANEOUS</scope>
</reference>
<proteinExistence type="evidence at protein level"/>
<organism>
    <name type="scientific">Homo sapiens</name>
    <name type="common">Human</name>
    <dbReference type="NCBI Taxonomy" id="9606"/>
    <lineage>
        <taxon>Eukaryota</taxon>
        <taxon>Metazoa</taxon>
        <taxon>Chordata</taxon>
        <taxon>Craniata</taxon>
        <taxon>Vertebrata</taxon>
        <taxon>Euteleostomi</taxon>
        <taxon>Mammalia</taxon>
        <taxon>Eutheria</taxon>
        <taxon>Euarchontoglires</taxon>
        <taxon>Primates</taxon>
        <taxon>Haplorrhini</taxon>
        <taxon>Catarrhini</taxon>
        <taxon>Hominidae</taxon>
        <taxon>Homo</taxon>
    </lineage>
</organism>
<accession>Q8WUJ1</accession>
<accession>B2R7R6</accession>
<accession>D3DTJ9</accession>
<accession>I3L1K2</accession>
<keyword id="KW-0025">Alternative splicing</keyword>
<keyword id="KW-0524">Neurogenesis</keyword>
<keyword id="KW-1267">Proteomics identification</keyword>
<keyword id="KW-1185">Reference proteome</keyword>
<keyword id="KW-0964">Secreted</keyword>
<keyword id="KW-0732">Signal</keyword>
<evidence type="ECO:0000250" key="1"/>
<evidence type="ECO:0000255" key="2"/>
<evidence type="ECO:0000269" key="3">
    <source>
    </source>
</evidence>
<evidence type="ECO:0000303" key="4">
    <source>
    </source>
</evidence>
<evidence type="ECO:0000303" key="5">
    <source>
    </source>
</evidence>
<evidence type="ECO:0000305" key="6"/>
<evidence type="ECO:0000312" key="7">
    <source>
        <dbReference type="HGNC" id="HGNC:28471"/>
    </source>
</evidence>
<comment type="function">
    <text evidence="1">Heme-binding protein which promotes neuronal but not astrocyte differentiation.</text>
</comment>
<comment type="interaction">
    <interactant intactId="EBI-19113794">
        <id>Q8WUJ1</id>
    </interactant>
    <interactant intactId="EBI-9834454">
        <id>P08631-2</id>
        <label>HCK</label>
    </interactant>
    <organismsDiffer>false</organismsDiffer>
    <experiments>3</experiments>
</comment>
<comment type="interaction">
    <interactant intactId="EBI-19113794">
        <id>Q8WUJ1</id>
    </interactant>
    <interactant intactId="EBI-723946">
        <id>P17152</id>
        <label>TMEM11</label>
    </interactant>
    <organismsDiffer>false</organismsDiffer>
    <experiments>3</experiments>
</comment>
<comment type="subcellular location">
    <subcellularLocation>
        <location evidence="1">Secreted</location>
    </subcellularLocation>
</comment>
<comment type="alternative products">
    <event type="alternative splicing"/>
    <isoform>
        <id>Q8WUJ1-1</id>
        <name>1</name>
        <sequence type="displayed"/>
    </isoform>
    <isoform>
        <id>Q8WUJ1-3</id>
        <name>2</name>
        <sequence type="described" ref="VSP_045028"/>
    </isoform>
</comment>
<comment type="domain">
    <text evidence="1">The cytochrome b5 heme-binding domain was proven to bind heme, although it lacks the conserved iron-binding His residues at position 73 and 106.</text>
</comment>
<comment type="miscellaneous">
    <text evidence="4 5">Non-classical progesterone receptors involved in extranuclear signaling are classified in 2 groups: the class II progestin and adipoQ receptor (PAQR) family (also called mPRs) (PAQR5, PAQR6, PAQR7, PAQR8 and PAQR9) and the b5-like heme/steroid-binding protein family (also called MAPRs) (PGRMC1, PGRMC2, NENF and CYB5D2).</text>
</comment>
<comment type="similarity">
    <text evidence="6">Belongs to the cytochrome b5 family. MAPR subfamily.</text>
</comment>
<gene>
    <name evidence="7" type="primary">CYB5D2</name>
</gene>